<dbReference type="EMBL" id="AB013137">
    <property type="protein sequence ID" value="BAA86926.1"/>
    <property type="molecule type" value="mRNA"/>
</dbReference>
<dbReference type="EMBL" id="AF109314">
    <property type="protein sequence ID" value="AAF04780.1"/>
    <property type="molecule type" value="mRNA"/>
</dbReference>
<dbReference type="EMBL" id="AF276917">
    <property type="protein sequence ID" value="AAF86464.1"/>
    <property type="molecule type" value="mRNA"/>
</dbReference>
<dbReference type="EMBL" id="BC012642">
    <property type="protein sequence ID" value="AAH12642.1"/>
    <property type="molecule type" value="mRNA"/>
</dbReference>
<dbReference type="CCDS" id="CCDS26651.1"/>
<dbReference type="RefSeq" id="NP_001347080.1">
    <property type="nucleotide sequence ID" value="NM_001360151.1"/>
</dbReference>
<dbReference type="RefSeq" id="NP_444338.2">
    <property type="nucleotide sequence ID" value="NM_053108.4"/>
</dbReference>
<dbReference type="RefSeq" id="XP_006517540.1">
    <property type="nucleotide sequence ID" value="XM_006517477.1"/>
</dbReference>
<dbReference type="SMR" id="Q9QUH0"/>
<dbReference type="BioGRID" id="220242">
    <property type="interactions" value="1"/>
</dbReference>
<dbReference type="FunCoup" id="Q9QUH0">
    <property type="interactions" value="705"/>
</dbReference>
<dbReference type="IntAct" id="Q9QUH0">
    <property type="interactions" value="1"/>
</dbReference>
<dbReference type="STRING" id="10090.ENSMUSP00000022082"/>
<dbReference type="iPTMnet" id="Q9QUH0"/>
<dbReference type="PhosphoSitePlus" id="Q9QUH0"/>
<dbReference type="SwissPalm" id="Q9QUH0"/>
<dbReference type="jPOST" id="Q9QUH0"/>
<dbReference type="PaxDb" id="10090-ENSMUSP00000022082"/>
<dbReference type="ProteomicsDB" id="267730"/>
<dbReference type="Pumba" id="Q9QUH0"/>
<dbReference type="Antibodypedia" id="3264">
    <property type="antibodies" value="258 antibodies from 31 providers"/>
</dbReference>
<dbReference type="DNASU" id="93692"/>
<dbReference type="Ensembl" id="ENSMUST00000022082.8">
    <property type="protein sequence ID" value="ENSMUSP00000022082.8"/>
    <property type="gene ID" value="ENSMUSG00000021591.9"/>
</dbReference>
<dbReference type="Ensembl" id="ENSMUST00000223120.2">
    <property type="protein sequence ID" value="ENSMUSP00000152802.2"/>
    <property type="gene ID" value="ENSMUSG00000021591.9"/>
</dbReference>
<dbReference type="GeneID" id="93692"/>
<dbReference type="KEGG" id="mmu:93692"/>
<dbReference type="UCSC" id="uc007rfx.2">
    <property type="organism name" value="mouse"/>
</dbReference>
<dbReference type="AGR" id="MGI:2135625"/>
<dbReference type="CTD" id="2745"/>
<dbReference type="MGI" id="MGI:2135625">
    <property type="gene designation" value="Glrx"/>
</dbReference>
<dbReference type="VEuPathDB" id="HostDB:ENSMUSG00000021591"/>
<dbReference type="eggNOG" id="KOG1752">
    <property type="taxonomic scope" value="Eukaryota"/>
</dbReference>
<dbReference type="GeneTree" id="ENSGT00900000141068"/>
<dbReference type="HOGENOM" id="CLU_026126_7_2_1"/>
<dbReference type="InParanoid" id="Q9QUH0"/>
<dbReference type="OMA" id="KPGHLEC"/>
<dbReference type="OrthoDB" id="418495at2759"/>
<dbReference type="PhylomeDB" id="Q9QUH0"/>
<dbReference type="TreeFam" id="TF326994"/>
<dbReference type="Reactome" id="R-MMU-499943">
    <property type="pathway name" value="Interconversion of nucleotide di- and triphosphates"/>
</dbReference>
<dbReference type="BioGRID-ORCS" id="93692">
    <property type="hits" value="5 hits in 78 CRISPR screens"/>
</dbReference>
<dbReference type="ChiTaRS" id="Glrx">
    <property type="organism name" value="mouse"/>
</dbReference>
<dbReference type="PRO" id="PR:Q9QUH0"/>
<dbReference type="Proteomes" id="UP000000589">
    <property type="component" value="Chromosome 13"/>
</dbReference>
<dbReference type="RNAct" id="Q9QUH0">
    <property type="molecule type" value="protein"/>
</dbReference>
<dbReference type="Bgee" id="ENSMUSG00000021591">
    <property type="expression patterns" value="Expressed in granulocyte and 264 other cell types or tissues"/>
</dbReference>
<dbReference type="ExpressionAtlas" id="Q9QUH0">
    <property type="expression patterns" value="baseline and differential"/>
</dbReference>
<dbReference type="GO" id="GO:0005737">
    <property type="term" value="C:cytoplasm"/>
    <property type="evidence" value="ECO:0000314"/>
    <property type="project" value="MGI"/>
</dbReference>
<dbReference type="GO" id="GO:0005739">
    <property type="term" value="C:mitochondrion"/>
    <property type="evidence" value="ECO:0007005"/>
    <property type="project" value="MGI"/>
</dbReference>
<dbReference type="GO" id="GO:0005634">
    <property type="term" value="C:nucleus"/>
    <property type="evidence" value="ECO:0000314"/>
    <property type="project" value="MGI"/>
</dbReference>
<dbReference type="GO" id="GO:0019153">
    <property type="term" value="F:protein-disulfide reductase (glutathione) activity"/>
    <property type="evidence" value="ECO:0000304"/>
    <property type="project" value="MGI"/>
</dbReference>
<dbReference type="GO" id="GO:0017080">
    <property type="term" value="F:sodium channel regulator activity"/>
    <property type="evidence" value="ECO:0007669"/>
    <property type="project" value="Ensembl"/>
</dbReference>
<dbReference type="GO" id="GO:0045838">
    <property type="term" value="P:positive regulation of membrane potential"/>
    <property type="evidence" value="ECO:0007669"/>
    <property type="project" value="Ensembl"/>
</dbReference>
<dbReference type="CDD" id="cd03419">
    <property type="entry name" value="GRX_GRXh_1_2_like"/>
    <property type="match status" value="1"/>
</dbReference>
<dbReference type="FunFam" id="3.40.30.10:FF:000214">
    <property type="entry name" value="glutaredoxin-1 isoform X1"/>
    <property type="match status" value="1"/>
</dbReference>
<dbReference type="Gene3D" id="3.40.30.10">
    <property type="entry name" value="Glutaredoxin"/>
    <property type="match status" value="1"/>
</dbReference>
<dbReference type="InterPro" id="IPR011767">
    <property type="entry name" value="GLR_AS"/>
</dbReference>
<dbReference type="InterPro" id="IPR047185">
    <property type="entry name" value="GLRX1"/>
</dbReference>
<dbReference type="InterPro" id="IPR002109">
    <property type="entry name" value="Glutaredoxin"/>
</dbReference>
<dbReference type="InterPro" id="IPR011899">
    <property type="entry name" value="Glutaredoxin_euk/vir"/>
</dbReference>
<dbReference type="InterPro" id="IPR014025">
    <property type="entry name" value="Glutaredoxin_subgr"/>
</dbReference>
<dbReference type="InterPro" id="IPR036249">
    <property type="entry name" value="Thioredoxin-like_sf"/>
</dbReference>
<dbReference type="NCBIfam" id="TIGR02180">
    <property type="entry name" value="GRX_euk"/>
    <property type="match status" value="1"/>
</dbReference>
<dbReference type="PANTHER" id="PTHR46185">
    <property type="entry name" value="GLUTAREDOXIN-1"/>
    <property type="match status" value="1"/>
</dbReference>
<dbReference type="PANTHER" id="PTHR46185:SF1">
    <property type="entry name" value="GLUTAREDOXIN-1"/>
    <property type="match status" value="1"/>
</dbReference>
<dbReference type="Pfam" id="PF00462">
    <property type="entry name" value="Glutaredoxin"/>
    <property type="match status" value="1"/>
</dbReference>
<dbReference type="PRINTS" id="PR00160">
    <property type="entry name" value="GLUTAREDOXIN"/>
</dbReference>
<dbReference type="SUPFAM" id="SSF52833">
    <property type="entry name" value="Thioredoxin-like"/>
    <property type="match status" value="1"/>
</dbReference>
<dbReference type="PROSITE" id="PS00195">
    <property type="entry name" value="GLUTAREDOXIN_1"/>
    <property type="match status" value="1"/>
</dbReference>
<dbReference type="PROSITE" id="PS51354">
    <property type="entry name" value="GLUTAREDOXIN_2"/>
    <property type="match status" value="1"/>
</dbReference>
<sequence>MAQEFVNCKIQSGKVVVFIKPTCPYCRKTQEILSQLPFKQGLLEFVDITATNNTSAIQDYLQQLTGARTVPRVFIGKDCIGGCSDLISMQQTGELMTRLKQIGALQL</sequence>
<protein>
    <recommendedName>
        <fullName>Glutaredoxin-1</fullName>
    </recommendedName>
    <alternativeName>
        <fullName>Thioltransferase-1</fullName>
        <shortName>TTase-1</shortName>
    </alternativeName>
</protein>
<evidence type="ECO:0000250" key="1"/>
<evidence type="ECO:0000255" key="2">
    <source>
        <dbReference type="PROSITE-ProRule" id="PRU00686"/>
    </source>
</evidence>
<evidence type="ECO:0000269" key="3">
    <source>
    </source>
</evidence>
<evidence type="ECO:0000305" key="4"/>
<evidence type="ECO:0007744" key="5">
    <source>
    </source>
</evidence>
<accession>Q9QUH0</accession>
<gene>
    <name type="primary">Glrx</name>
    <name type="synonym">Glrx1</name>
    <name type="synonym">Grx</name>
    <name type="synonym">Grx1</name>
</gene>
<reference key="1">
    <citation type="journal article" date="1999" name="Free Radic. Res.">
        <title>Mouse glutaredoxin -- cDNA cloning, high level expression in E. coli and its possible implication in redox regulation of the DNA binding activity in transcription factor PEBP2.</title>
        <authorList>
            <person name="Nakamura T."/>
            <person name="Ohno T."/>
            <person name="Hirota K."/>
            <person name="Nishiyama A."/>
            <person name="Nakamura H."/>
            <person name="Wada H."/>
            <person name="Yodoi J."/>
        </authorList>
    </citation>
    <scope>NUCLEOTIDE SEQUENCE [MRNA]</scope>
    <scope>MUTAGENESIS</scope>
    <source>
        <tissue>Spleen</tissue>
    </source>
</reference>
<reference key="2">
    <citation type="journal article" date="1999" name="DNA Seq.">
        <title>Cloning and sequencing of mouse glutaredoxin (grx) cDNA.</title>
        <authorList>
            <person name="Miranda-Vizuete A."/>
            <person name="Pedrajas J.R."/>
            <person name="Damdimopoulos A.E."/>
            <person name="Spyrou G."/>
        </authorList>
    </citation>
    <scope>NUCLEOTIDE SEQUENCE [MRNA]</scope>
    <source>
        <tissue>Liver</tissue>
    </source>
</reference>
<reference key="3">
    <citation type="submission" date="2000-06" db="EMBL/GenBank/DDBJ databases">
        <authorList>
            <person name="Reddy P.G."/>
            <person name="Bhuyan D.K."/>
            <person name="Bhuyan K.C."/>
        </authorList>
    </citation>
    <scope>NUCLEOTIDE SEQUENCE [MRNA]</scope>
    <source>
        <strain>CFW</strain>
        <tissue>Lens</tissue>
    </source>
</reference>
<reference key="4">
    <citation type="journal article" date="2004" name="Genome Res.">
        <title>The status, quality, and expansion of the NIH full-length cDNA project: the Mammalian Gene Collection (MGC).</title>
        <authorList>
            <consortium name="The MGC Project Team"/>
        </authorList>
    </citation>
    <scope>NUCLEOTIDE SEQUENCE [LARGE SCALE MRNA]</scope>
    <source>
        <strain>FVB/N</strain>
        <tissue>Colon</tissue>
    </source>
</reference>
<reference key="5">
    <citation type="journal article" date="2010" name="Cell">
        <title>A tissue-specific atlas of mouse protein phosphorylation and expression.</title>
        <authorList>
            <person name="Huttlin E.L."/>
            <person name="Jedrychowski M.P."/>
            <person name="Elias J.E."/>
            <person name="Goswami T."/>
            <person name="Rad R."/>
            <person name="Beausoleil S.A."/>
            <person name="Villen J."/>
            <person name="Haas W."/>
            <person name="Sowa M.E."/>
            <person name="Gygi S.P."/>
        </authorList>
    </citation>
    <scope>IDENTIFICATION BY MASS SPECTROMETRY [LARGE SCALE ANALYSIS]</scope>
    <source>
        <tissue>Brain</tissue>
        <tissue>Brown adipose tissue</tissue>
        <tissue>Heart</tissue>
        <tissue>Kidney</tissue>
        <tissue>Liver</tissue>
        <tissue>Lung</tissue>
        <tissue>Pancreas</tissue>
        <tissue>Spleen</tissue>
        <tissue>Testis</tissue>
    </source>
</reference>
<reference key="6">
    <citation type="journal article" date="2013" name="Mol. Cell">
        <title>SIRT5-mediated lysine desuccinylation impacts diverse metabolic pathways.</title>
        <authorList>
            <person name="Park J."/>
            <person name="Chen Y."/>
            <person name="Tishkoff D.X."/>
            <person name="Peng C."/>
            <person name="Tan M."/>
            <person name="Dai L."/>
            <person name="Xie Z."/>
            <person name="Zhang Y."/>
            <person name="Zwaans B.M."/>
            <person name="Skinner M.E."/>
            <person name="Lombard D.B."/>
            <person name="Zhao Y."/>
        </authorList>
    </citation>
    <scope>ACETYLATION [LARGE SCALE ANALYSIS] AT ALA-2</scope>
    <scope>SUCCINYLATION [LARGE SCALE ANALYSIS] AT LYS-9</scope>
    <scope>CLEAVAGE OF INITIATOR METHIONINE [LARGE SCALE ANALYSIS]</scope>
    <scope>IDENTIFICATION BY MASS SPECTROMETRY [LARGE SCALE ANALYSIS]</scope>
    <source>
        <tissue>Liver</tissue>
    </source>
</reference>
<name>GLRX1_MOUSE</name>
<organism>
    <name type="scientific">Mus musculus</name>
    <name type="common">Mouse</name>
    <dbReference type="NCBI Taxonomy" id="10090"/>
    <lineage>
        <taxon>Eukaryota</taxon>
        <taxon>Metazoa</taxon>
        <taxon>Chordata</taxon>
        <taxon>Craniata</taxon>
        <taxon>Vertebrata</taxon>
        <taxon>Euteleostomi</taxon>
        <taxon>Mammalia</taxon>
        <taxon>Eutheria</taxon>
        <taxon>Euarchontoglires</taxon>
        <taxon>Glires</taxon>
        <taxon>Rodentia</taxon>
        <taxon>Myomorpha</taxon>
        <taxon>Muroidea</taxon>
        <taxon>Muridae</taxon>
        <taxon>Murinae</taxon>
        <taxon>Mus</taxon>
        <taxon>Mus</taxon>
    </lineage>
</organism>
<feature type="initiator methionine" description="Removed" evidence="5">
    <location>
        <position position="1"/>
    </location>
</feature>
<feature type="chain" id="PRO_0000141601" description="Glutaredoxin-1">
    <location>
        <begin position="2"/>
        <end position="107"/>
    </location>
</feature>
<feature type="domain" description="Glutaredoxin" evidence="2">
    <location>
        <begin position="3"/>
        <end position="106"/>
    </location>
</feature>
<feature type="modified residue" description="N-acetylalanine" evidence="5">
    <location>
        <position position="2"/>
    </location>
</feature>
<feature type="modified residue" description="N6-succinyllysine" evidence="5">
    <location>
        <position position="9"/>
    </location>
</feature>
<feature type="disulfide bond" description="Redox-active">
    <location>
        <begin position="23"/>
        <end position="26"/>
    </location>
</feature>
<feature type="disulfide bond" evidence="1">
    <location>
        <begin position="79"/>
        <end position="83"/>
    </location>
</feature>
<feature type="mutagenesis site" description="Loss of activity." evidence="3">
    <original>C</original>
    <variation>S</variation>
    <location>
        <position position="23"/>
    </location>
</feature>
<feature type="mutagenesis site" description="Loss of activity." evidence="3">
    <original>C</original>
    <variation>S</variation>
    <location>
        <position position="26"/>
    </location>
</feature>
<comment type="function">
    <text>Has a glutathione-disulfide oxidoreductase activity in the presence of NADPH and glutathione reductase. Reduces low molecular weight disulfides and proteins.</text>
</comment>
<comment type="subcellular location">
    <subcellularLocation>
        <location>Cytoplasm</location>
    </subcellularLocation>
</comment>
<comment type="similarity">
    <text evidence="4">Belongs to the glutaredoxin family.</text>
</comment>
<keyword id="KW-0007">Acetylation</keyword>
<keyword id="KW-0963">Cytoplasm</keyword>
<keyword id="KW-1015">Disulfide bond</keyword>
<keyword id="KW-0249">Electron transport</keyword>
<keyword id="KW-0676">Redox-active center</keyword>
<keyword id="KW-1185">Reference proteome</keyword>
<keyword id="KW-0813">Transport</keyword>
<proteinExistence type="evidence at protein level"/>